<reference key="1">
    <citation type="journal article" date="2011" name="J. Bacteriol.">
        <title>Complete genome sequence of the plant growth-promoting endophyte Burkholderia phytofirmans strain PsJN.</title>
        <authorList>
            <person name="Weilharter A."/>
            <person name="Mitter B."/>
            <person name="Shin M.V."/>
            <person name="Chain P.S."/>
            <person name="Nowak J."/>
            <person name="Sessitsch A."/>
        </authorList>
    </citation>
    <scope>NUCLEOTIDE SEQUENCE [LARGE SCALE GENOMIC DNA]</scope>
    <source>
        <strain>DSM 17436 / LMG 22146 / PsJN</strain>
    </source>
</reference>
<comment type="function">
    <text evidence="1">Single strand-specific metallo-endoribonuclease involved in late-stage 70S ribosome quality control and in maturation of the 3' terminus of the 16S rRNA.</text>
</comment>
<comment type="cofactor">
    <cofactor evidence="1">
        <name>Zn(2+)</name>
        <dbReference type="ChEBI" id="CHEBI:29105"/>
    </cofactor>
    <text evidence="1">Binds 1 zinc ion.</text>
</comment>
<comment type="subcellular location">
    <subcellularLocation>
        <location evidence="1">Cytoplasm</location>
    </subcellularLocation>
</comment>
<comment type="similarity">
    <text evidence="1">Belongs to the endoribonuclease YbeY family.</text>
</comment>
<dbReference type="EC" id="3.1.-.-" evidence="1"/>
<dbReference type="EMBL" id="CP001052">
    <property type="protein sequence ID" value="ACD17722.1"/>
    <property type="molecule type" value="Genomic_DNA"/>
</dbReference>
<dbReference type="RefSeq" id="WP_012434290.1">
    <property type="nucleotide sequence ID" value="NC_010681.1"/>
</dbReference>
<dbReference type="SMR" id="B2SYI7"/>
<dbReference type="STRING" id="398527.Bphyt_3331"/>
<dbReference type="KEGG" id="bpy:Bphyt_3331"/>
<dbReference type="eggNOG" id="COG0319">
    <property type="taxonomic scope" value="Bacteria"/>
</dbReference>
<dbReference type="HOGENOM" id="CLU_106710_0_1_4"/>
<dbReference type="OrthoDB" id="9807740at2"/>
<dbReference type="Proteomes" id="UP000001739">
    <property type="component" value="Chromosome 1"/>
</dbReference>
<dbReference type="GO" id="GO:0005737">
    <property type="term" value="C:cytoplasm"/>
    <property type="evidence" value="ECO:0007669"/>
    <property type="project" value="UniProtKB-SubCell"/>
</dbReference>
<dbReference type="GO" id="GO:0004222">
    <property type="term" value="F:metalloendopeptidase activity"/>
    <property type="evidence" value="ECO:0007669"/>
    <property type="project" value="InterPro"/>
</dbReference>
<dbReference type="GO" id="GO:0004521">
    <property type="term" value="F:RNA endonuclease activity"/>
    <property type="evidence" value="ECO:0007669"/>
    <property type="project" value="UniProtKB-UniRule"/>
</dbReference>
<dbReference type="GO" id="GO:0008270">
    <property type="term" value="F:zinc ion binding"/>
    <property type="evidence" value="ECO:0007669"/>
    <property type="project" value="UniProtKB-UniRule"/>
</dbReference>
<dbReference type="GO" id="GO:0006364">
    <property type="term" value="P:rRNA processing"/>
    <property type="evidence" value="ECO:0007669"/>
    <property type="project" value="UniProtKB-UniRule"/>
</dbReference>
<dbReference type="Gene3D" id="3.40.390.30">
    <property type="entry name" value="Metalloproteases ('zincins'), catalytic domain"/>
    <property type="match status" value="1"/>
</dbReference>
<dbReference type="HAMAP" id="MF_00009">
    <property type="entry name" value="Endoribonucl_YbeY"/>
    <property type="match status" value="1"/>
</dbReference>
<dbReference type="InterPro" id="IPR023091">
    <property type="entry name" value="MetalPrtase_cat_dom_sf_prd"/>
</dbReference>
<dbReference type="InterPro" id="IPR002036">
    <property type="entry name" value="YbeY"/>
</dbReference>
<dbReference type="InterPro" id="IPR020549">
    <property type="entry name" value="YbeY_CS"/>
</dbReference>
<dbReference type="NCBIfam" id="TIGR00043">
    <property type="entry name" value="rRNA maturation RNase YbeY"/>
    <property type="match status" value="1"/>
</dbReference>
<dbReference type="PANTHER" id="PTHR46986">
    <property type="entry name" value="ENDORIBONUCLEASE YBEY, CHLOROPLASTIC"/>
    <property type="match status" value="1"/>
</dbReference>
<dbReference type="PANTHER" id="PTHR46986:SF1">
    <property type="entry name" value="ENDORIBONUCLEASE YBEY, CHLOROPLASTIC"/>
    <property type="match status" value="1"/>
</dbReference>
<dbReference type="Pfam" id="PF02130">
    <property type="entry name" value="YbeY"/>
    <property type="match status" value="1"/>
</dbReference>
<dbReference type="SUPFAM" id="SSF55486">
    <property type="entry name" value="Metalloproteases ('zincins'), catalytic domain"/>
    <property type="match status" value="1"/>
</dbReference>
<dbReference type="PROSITE" id="PS01306">
    <property type="entry name" value="UPF0054"/>
    <property type="match status" value="1"/>
</dbReference>
<gene>
    <name evidence="1" type="primary">ybeY</name>
    <name type="ordered locus">Bphyt_3331</name>
</gene>
<sequence length="153" mass="17023">MSRAPKLTLNLQFPAARSWPEHKALLPRATVAGWIKAALFADGELTVRFVDADEGRTLNRTYRGKDYSTNVLTFAYAESEDDPVTGDLILCCPVVEKEAAEQGKPLIAHYAHLLVHGTLHAQGYDHEVEEEAEEMEAIETEILAKLGFPDPYQ</sequence>
<proteinExistence type="inferred from homology"/>
<evidence type="ECO:0000255" key="1">
    <source>
        <dbReference type="HAMAP-Rule" id="MF_00009"/>
    </source>
</evidence>
<name>YBEY_PARPJ</name>
<protein>
    <recommendedName>
        <fullName evidence="1">Endoribonuclease YbeY</fullName>
        <ecNumber evidence="1">3.1.-.-</ecNumber>
    </recommendedName>
</protein>
<feature type="chain" id="PRO_1000089158" description="Endoribonuclease YbeY">
    <location>
        <begin position="1"/>
        <end position="153"/>
    </location>
</feature>
<feature type="binding site" evidence="1">
    <location>
        <position position="116"/>
    </location>
    <ligand>
        <name>Zn(2+)</name>
        <dbReference type="ChEBI" id="CHEBI:29105"/>
        <note>catalytic</note>
    </ligand>
</feature>
<feature type="binding site" evidence="1">
    <location>
        <position position="120"/>
    </location>
    <ligand>
        <name>Zn(2+)</name>
        <dbReference type="ChEBI" id="CHEBI:29105"/>
        <note>catalytic</note>
    </ligand>
</feature>
<feature type="binding site" evidence="1">
    <location>
        <position position="126"/>
    </location>
    <ligand>
        <name>Zn(2+)</name>
        <dbReference type="ChEBI" id="CHEBI:29105"/>
        <note>catalytic</note>
    </ligand>
</feature>
<keyword id="KW-0963">Cytoplasm</keyword>
<keyword id="KW-0255">Endonuclease</keyword>
<keyword id="KW-0378">Hydrolase</keyword>
<keyword id="KW-0479">Metal-binding</keyword>
<keyword id="KW-0540">Nuclease</keyword>
<keyword id="KW-0690">Ribosome biogenesis</keyword>
<keyword id="KW-0698">rRNA processing</keyword>
<keyword id="KW-0862">Zinc</keyword>
<organism>
    <name type="scientific">Paraburkholderia phytofirmans (strain DSM 17436 / LMG 22146 / PsJN)</name>
    <name type="common">Burkholderia phytofirmans</name>
    <dbReference type="NCBI Taxonomy" id="398527"/>
    <lineage>
        <taxon>Bacteria</taxon>
        <taxon>Pseudomonadati</taxon>
        <taxon>Pseudomonadota</taxon>
        <taxon>Betaproteobacteria</taxon>
        <taxon>Burkholderiales</taxon>
        <taxon>Burkholderiaceae</taxon>
        <taxon>Paraburkholderia</taxon>
    </lineage>
</organism>
<accession>B2SYI7</accession>